<organism>
    <name type="scientific">Roseobacter denitrificans (strain ATCC 33942 / OCh 114)</name>
    <name type="common">Erythrobacter sp. (strain OCh 114)</name>
    <name type="synonym">Roseobacter denitrificans</name>
    <dbReference type="NCBI Taxonomy" id="375451"/>
    <lineage>
        <taxon>Bacteria</taxon>
        <taxon>Pseudomonadati</taxon>
        <taxon>Pseudomonadota</taxon>
        <taxon>Alphaproteobacteria</taxon>
        <taxon>Rhodobacterales</taxon>
        <taxon>Roseobacteraceae</taxon>
        <taxon>Roseobacter</taxon>
    </lineage>
</organism>
<evidence type="ECO:0000255" key="1">
    <source>
        <dbReference type="HAMAP-Rule" id="MF_01020"/>
    </source>
</evidence>
<protein>
    <recommendedName>
        <fullName evidence="1">Phosphoribosyl-ATP pyrophosphatase</fullName>
        <shortName evidence="1">PRA-PH</shortName>
        <ecNumber evidence="1">3.6.1.31</ecNumber>
    </recommendedName>
</protein>
<reference key="1">
    <citation type="journal article" date="2007" name="J. Bacteriol.">
        <title>The complete genome sequence of Roseobacter denitrificans reveals a mixotrophic rather than photosynthetic metabolism.</title>
        <authorList>
            <person name="Swingley W.D."/>
            <person name="Sadekar S."/>
            <person name="Mastrian S.D."/>
            <person name="Matthies H.J."/>
            <person name="Hao J."/>
            <person name="Ramos H."/>
            <person name="Acharya C.R."/>
            <person name="Conrad A.L."/>
            <person name="Taylor H.L."/>
            <person name="Dejesa L.C."/>
            <person name="Shah M.K."/>
            <person name="O'Huallachain M.E."/>
            <person name="Lince M.T."/>
            <person name="Blankenship R.E."/>
            <person name="Beatty J.T."/>
            <person name="Touchman J.W."/>
        </authorList>
    </citation>
    <scope>NUCLEOTIDE SEQUENCE [LARGE SCALE GENOMIC DNA]</scope>
    <source>
        <strain>ATCC 33942 / OCh 114</strain>
    </source>
</reference>
<comment type="catalytic activity">
    <reaction evidence="1">
        <text>1-(5-phospho-beta-D-ribosyl)-ATP + H2O = 1-(5-phospho-beta-D-ribosyl)-5'-AMP + diphosphate + H(+)</text>
        <dbReference type="Rhea" id="RHEA:22828"/>
        <dbReference type="ChEBI" id="CHEBI:15377"/>
        <dbReference type="ChEBI" id="CHEBI:15378"/>
        <dbReference type="ChEBI" id="CHEBI:33019"/>
        <dbReference type="ChEBI" id="CHEBI:59457"/>
        <dbReference type="ChEBI" id="CHEBI:73183"/>
        <dbReference type="EC" id="3.6.1.31"/>
    </reaction>
</comment>
<comment type="pathway">
    <text evidence="1">Amino-acid biosynthesis; L-histidine biosynthesis; L-histidine from 5-phospho-alpha-D-ribose 1-diphosphate: step 2/9.</text>
</comment>
<comment type="subcellular location">
    <subcellularLocation>
        <location evidence="1">Cytoplasm</location>
    </subcellularLocation>
</comment>
<comment type="similarity">
    <text evidence="1">Belongs to the PRA-PH family.</text>
</comment>
<dbReference type="EC" id="3.6.1.31" evidence="1"/>
<dbReference type="EMBL" id="CP000362">
    <property type="protein sequence ID" value="ABG33043.1"/>
    <property type="molecule type" value="Genomic_DNA"/>
</dbReference>
<dbReference type="RefSeq" id="WP_011569656.1">
    <property type="nucleotide sequence ID" value="NC_008209.1"/>
</dbReference>
<dbReference type="SMR" id="Q162Q0"/>
<dbReference type="STRING" id="375451.RD1_3562"/>
<dbReference type="KEGG" id="rde:RD1_3562"/>
<dbReference type="eggNOG" id="COG0140">
    <property type="taxonomic scope" value="Bacteria"/>
</dbReference>
<dbReference type="HOGENOM" id="CLU_123337_1_1_5"/>
<dbReference type="OrthoDB" id="9814738at2"/>
<dbReference type="UniPathway" id="UPA00031">
    <property type="reaction ID" value="UER00007"/>
</dbReference>
<dbReference type="Proteomes" id="UP000007029">
    <property type="component" value="Chromosome"/>
</dbReference>
<dbReference type="GO" id="GO:0005737">
    <property type="term" value="C:cytoplasm"/>
    <property type="evidence" value="ECO:0007669"/>
    <property type="project" value="UniProtKB-SubCell"/>
</dbReference>
<dbReference type="GO" id="GO:0005524">
    <property type="term" value="F:ATP binding"/>
    <property type="evidence" value="ECO:0007669"/>
    <property type="project" value="UniProtKB-KW"/>
</dbReference>
<dbReference type="GO" id="GO:0004636">
    <property type="term" value="F:phosphoribosyl-ATP diphosphatase activity"/>
    <property type="evidence" value="ECO:0007669"/>
    <property type="project" value="UniProtKB-UniRule"/>
</dbReference>
<dbReference type="GO" id="GO:0000105">
    <property type="term" value="P:L-histidine biosynthetic process"/>
    <property type="evidence" value="ECO:0007669"/>
    <property type="project" value="UniProtKB-UniRule"/>
</dbReference>
<dbReference type="CDD" id="cd11534">
    <property type="entry name" value="NTP-PPase_HisIE_like"/>
    <property type="match status" value="1"/>
</dbReference>
<dbReference type="Gene3D" id="1.10.287.1080">
    <property type="entry name" value="MazG-like"/>
    <property type="match status" value="1"/>
</dbReference>
<dbReference type="HAMAP" id="MF_01020">
    <property type="entry name" value="HisE"/>
    <property type="match status" value="1"/>
</dbReference>
<dbReference type="InterPro" id="IPR008179">
    <property type="entry name" value="HisE"/>
</dbReference>
<dbReference type="InterPro" id="IPR021130">
    <property type="entry name" value="PRib-ATP_PPHydrolase-like"/>
</dbReference>
<dbReference type="NCBIfam" id="TIGR03188">
    <property type="entry name" value="histidine_hisI"/>
    <property type="match status" value="1"/>
</dbReference>
<dbReference type="NCBIfam" id="NF001611">
    <property type="entry name" value="PRK00400.1-3"/>
    <property type="match status" value="1"/>
</dbReference>
<dbReference type="NCBIfam" id="NF001613">
    <property type="entry name" value="PRK00400.1-5"/>
    <property type="match status" value="1"/>
</dbReference>
<dbReference type="PANTHER" id="PTHR42945">
    <property type="entry name" value="HISTIDINE BIOSYNTHESIS BIFUNCTIONAL PROTEIN"/>
    <property type="match status" value="1"/>
</dbReference>
<dbReference type="PANTHER" id="PTHR42945:SF1">
    <property type="entry name" value="HISTIDINE BIOSYNTHESIS BIFUNCTIONAL PROTEIN HIS7"/>
    <property type="match status" value="1"/>
</dbReference>
<dbReference type="Pfam" id="PF01503">
    <property type="entry name" value="PRA-PH"/>
    <property type="match status" value="1"/>
</dbReference>
<dbReference type="SUPFAM" id="SSF101386">
    <property type="entry name" value="all-alpha NTP pyrophosphatases"/>
    <property type="match status" value="1"/>
</dbReference>
<sequence>MTLDALFATILDRKTADPASSWTAQLLSKGPEKCAEKFGEEAVEAIIEAVKGDRDALTGEAADVLYHLLVMLAACDVDLKDVLAELERRQNTSGIAEKQGRFKAP</sequence>
<name>HIS2_ROSDO</name>
<keyword id="KW-0028">Amino-acid biosynthesis</keyword>
<keyword id="KW-0067">ATP-binding</keyword>
<keyword id="KW-0963">Cytoplasm</keyword>
<keyword id="KW-0368">Histidine biosynthesis</keyword>
<keyword id="KW-0378">Hydrolase</keyword>
<keyword id="KW-0547">Nucleotide-binding</keyword>
<keyword id="KW-1185">Reference proteome</keyword>
<accession>Q162Q0</accession>
<feature type="chain" id="PRO_0000319662" description="Phosphoribosyl-ATP pyrophosphatase">
    <location>
        <begin position="1"/>
        <end position="105"/>
    </location>
</feature>
<proteinExistence type="inferred from homology"/>
<gene>
    <name evidence="1" type="primary">hisE</name>
    <name type="ordered locus">RD1_3562</name>
</gene>